<organism>
    <name type="scientific">Castellaniella defragrans (strain DSM 12143 / CCUG 39792 / 65Phen)</name>
    <name type="common">Alcaligenes defragrans</name>
    <dbReference type="NCBI Taxonomy" id="1437824"/>
    <lineage>
        <taxon>Bacteria</taxon>
        <taxon>Pseudomonadati</taxon>
        <taxon>Pseudomonadota</taxon>
        <taxon>Betaproteobacteria</taxon>
        <taxon>Burkholderiales</taxon>
        <taxon>Alcaligenaceae</taxon>
        <taxon>Castellaniella</taxon>
    </lineage>
</organism>
<protein>
    <recommendedName>
        <fullName evidence="4">Probable ferredoxin reductase CtmF</fullName>
        <ecNumber evidence="4">1.-.-.-</ecNumber>
    </recommendedName>
</protein>
<evidence type="ECO:0000250" key="1">
    <source>
        <dbReference type="UniProtKB" id="P16640"/>
    </source>
</evidence>
<evidence type="ECO:0000269" key="2">
    <source>
    </source>
</evidence>
<evidence type="ECO:0000303" key="3">
    <source>
    </source>
</evidence>
<evidence type="ECO:0000305" key="4"/>
<evidence type="ECO:0000305" key="5">
    <source>
    </source>
</evidence>
<evidence type="ECO:0000312" key="6">
    <source>
        <dbReference type="EMBL" id="CDM25285.1"/>
    </source>
</evidence>
<keyword id="KW-0274">FAD</keyword>
<keyword id="KW-0285">Flavoprotein</keyword>
<keyword id="KW-0560">Oxidoreductase</keyword>
<keyword id="KW-1185">Reference proteome</keyword>
<feature type="chain" id="PRO_0000459108" description="Probable ferredoxin reductase CtmF">
    <location>
        <begin position="1"/>
        <end position="409"/>
    </location>
</feature>
<feature type="binding site" evidence="1">
    <location>
        <position position="15"/>
    </location>
    <ligand>
        <name>FAD</name>
        <dbReference type="ChEBI" id="CHEBI:57692"/>
    </ligand>
</feature>
<feature type="binding site" evidence="1">
    <location>
        <position position="37"/>
    </location>
    <ligand>
        <name>FAD</name>
        <dbReference type="ChEBI" id="CHEBI:57692"/>
    </ligand>
</feature>
<feature type="binding site" evidence="1">
    <location>
        <position position="50"/>
    </location>
    <ligand>
        <name>FAD</name>
        <dbReference type="ChEBI" id="CHEBI:57692"/>
    </ligand>
</feature>
<feature type="binding site" evidence="1">
    <location>
        <position position="83"/>
    </location>
    <ligand>
        <name>FAD</name>
        <dbReference type="ChEBI" id="CHEBI:57692"/>
    </ligand>
</feature>
<feature type="binding site" evidence="1">
    <location>
        <position position="279"/>
    </location>
    <ligand>
        <name>FAD</name>
        <dbReference type="ChEBI" id="CHEBI:57692"/>
    </ligand>
</feature>
<feature type="binding site" evidence="1">
    <location>
        <position position="298"/>
    </location>
    <ligand>
        <name>FAD</name>
        <dbReference type="ChEBI" id="CHEBI:57692"/>
    </ligand>
</feature>
<proteinExistence type="evidence at protein level"/>
<sequence length="409" mass="43453">MNANERVIIVGAGHAGATVAMQLRKMDFAGDIILLGDERFSPYQRPPLSKAYLAGEEDAESLKLWPDEIYESKGIMLVQSATVAALDRAGKYVRLADKTEVSYDCLVIATGSRPREIALPGIHLAGVHRLHTIEDADGLKAAIGPGKRVALVGGGYIGLEVAASVVGLGGSAVVIEQQDRVLAGVASVPLSDYLRRAHEDRGVEFLTGVQVARIEGSKGRVTGIRLGDDRLVPCDAAVVCVGVVPNTGLAVAAGLDGANGIVVDHDARTADPAIFAIGDVTCRPMPLYDDRMFCLRSVPNALEQAKQAAAAMMGKPRPKPEVPWFWSHQFDLKVQIAGVPFDADDLVLRGDPAAGAFSAFHMKDGRVLAVETVDAPLEFAAGKQMILRKSVLSREQLVDPRVEVTALAV</sequence>
<accession>W8X9R5</accession>
<comment type="function">
    <text evidence="2 5">Involved in the degradation of the cyclic monoterpene limonene (PubMed:24952578). Probably part of an electron transfer system involved in the oxidation of limonene to perillyl alcohol (Probable).</text>
</comment>
<comment type="cofactor">
    <cofactor evidence="1">
        <name>FAD</name>
        <dbReference type="ChEBI" id="CHEBI:57692"/>
    </cofactor>
</comment>
<comment type="pathway">
    <text evidence="2">Terpene metabolism; monoterpene degradation.</text>
</comment>
<comment type="induction">
    <text evidence="2">By the monoterpene alpha-phellandrene, but not by acetate.</text>
</comment>
<comment type="similarity">
    <text evidence="4">Belongs to the FAD-dependent oxidoreductase family.</text>
</comment>
<name>CTMF_CASD6</name>
<dbReference type="EC" id="1.-.-.-" evidence="4"/>
<dbReference type="EMBL" id="HG916765">
    <property type="protein sequence ID" value="CDM25285.1"/>
    <property type="molecule type" value="Genomic_DNA"/>
</dbReference>
<dbReference type="RefSeq" id="WP_043683936.1">
    <property type="nucleotide sequence ID" value="NZ_HG916765.1"/>
</dbReference>
<dbReference type="SMR" id="W8X9R5"/>
<dbReference type="STRING" id="1437824.BN940_14201"/>
<dbReference type="KEGG" id="cdn:BN940_14201"/>
<dbReference type="PATRIC" id="fig|1437824.5.peg.2804"/>
<dbReference type="eggNOG" id="COG0446">
    <property type="taxonomic scope" value="Bacteria"/>
</dbReference>
<dbReference type="HOGENOM" id="CLU_003291_4_0_4"/>
<dbReference type="OrthoDB" id="9769238at2"/>
<dbReference type="UniPathway" id="UPA00137"/>
<dbReference type="Proteomes" id="UP000019805">
    <property type="component" value="Chromosome"/>
</dbReference>
<dbReference type="GO" id="GO:0005737">
    <property type="term" value="C:cytoplasm"/>
    <property type="evidence" value="ECO:0007669"/>
    <property type="project" value="TreeGrafter"/>
</dbReference>
<dbReference type="GO" id="GO:0016651">
    <property type="term" value="F:oxidoreductase activity, acting on NAD(P)H"/>
    <property type="evidence" value="ECO:0007669"/>
    <property type="project" value="TreeGrafter"/>
</dbReference>
<dbReference type="Gene3D" id="3.30.390.30">
    <property type="match status" value="1"/>
</dbReference>
<dbReference type="Gene3D" id="3.50.50.60">
    <property type="entry name" value="FAD/NAD(P)-binding domain"/>
    <property type="match status" value="2"/>
</dbReference>
<dbReference type="InterPro" id="IPR050446">
    <property type="entry name" value="FAD-oxidoreductase/Apoptosis"/>
</dbReference>
<dbReference type="InterPro" id="IPR036188">
    <property type="entry name" value="FAD/NAD-bd_sf"/>
</dbReference>
<dbReference type="InterPro" id="IPR023753">
    <property type="entry name" value="FAD/NAD-binding_dom"/>
</dbReference>
<dbReference type="InterPro" id="IPR016156">
    <property type="entry name" value="FAD/NAD-linked_Rdtase_dimer_sf"/>
</dbReference>
<dbReference type="InterPro" id="IPR028202">
    <property type="entry name" value="Reductase_C"/>
</dbReference>
<dbReference type="PANTHER" id="PTHR43557">
    <property type="entry name" value="APOPTOSIS-INDUCING FACTOR 1"/>
    <property type="match status" value="1"/>
</dbReference>
<dbReference type="PANTHER" id="PTHR43557:SF2">
    <property type="entry name" value="RIESKE DOMAIN-CONTAINING PROTEIN-RELATED"/>
    <property type="match status" value="1"/>
</dbReference>
<dbReference type="Pfam" id="PF07992">
    <property type="entry name" value="Pyr_redox_2"/>
    <property type="match status" value="1"/>
</dbReference>
<dbReference type="Pfam" id="PF14759">
    <property type="entry name" value="Reductase_C"/>
    <property type="match status" value="1"/>
</dbReference>
<dbReference type="PRINTS" id="PR00368">
    <property type="entry name" value="FADPNR"/>
</dbReference>
<dbReference type="PRINTS" id="PR00411">
    <property type="entry name" value="PNDRDTASEI"/>
</dbReference>
<dbReference type="SUPFAM" id="SSF51905">
    <property type="entry name" value="FAD/NAD(P)-binding domain"/>
    <property type="match status" value="1"/>
</dbReference>
<dbReference type="SUPFAM" id="SSF55424">
    <property type="entry name" value="FAD/NAD-linked reductases, dimerisation (C-terminal) domain"/>
    <property type="match status" value="1"/>
</dbReference>
<gene>
    <name evidence="3" type="primary">ctmF</name>
    <name evidence="6" type="ORF">BN940_14201</name>
</gene>
<reference key="1">
    <citation type="journal article" date="2014" name="BMC Microbiol.">
        <title>The oxygen-independent metabolism of cyclic monoterpenes in Castellaniella defragrans 65Phen.</title>
        <authorList>
            <person name="Petasch J."/>
            <person name="Disch E.M."/>
            <person name="Markert S."/>
            <person name="Becher D."/>
            <person name="Schweder T."/>
            <person name="Huttel B."/>
            <person name="Reinhardt R."/>
            <person name="Harder J."/>
        </authorList>
    </citation>
    <scope>NUCLEOTIDE SEQUENCE [LARGE SCALE GENOMIC DNA]</scope>
    <scope>IDENTIFICATION BY MASS SPECTROMETRY</scope>
    <scope>FUNCTION</scope>
    <scope>PATHWAY</scope>
    <scope>INDUCTION</scope>
    <source>
        <strain>DSM 12143 / CCUG 39792 / 65Phen</strain>
    </source>
</reference>